<dbReference type="EMBL" id="CP000046">
    <property type="protein sequence ID" value="AAW36369.1"/>
    <property type="molecule type" value="Genomic_DNA"/>
</dbReference>
<dbReference type="RefSeq" id="WP_001048985.1">
    <property type="nucleotide sequence ID" value="NZ_JBGOFO010000005.1"/>
</dbReference>
<dbReference type="SMR" id="Q5HI43"/>
<dbReference type="KEGG" id="sac:SACOL0681"/>
<dbReference type="HOGENOM" id="CLU_082058_3_1_9"/>
<dbReference type="Proteomes" id="UP000000530">
    <property type="component" value="Chromosome"/>
</dbReference>
<dbReference type="GO" id="GO:0005886">
    <property type="term" value="C:plasma membrane"/>
    <property type="evidence" value="ECO:0007669"/>
    <property type="project" value="UniProtKB-SubCell"/>
</dbReference>
<dbReference type="GO" id="GO:0015297">
    <property type="term" value="F:antiporter activity"/>
    <property type="evidence" value="ECO:0007669"/>
    <property type="project" value="UniProtKB-KW"/>
</dbReference>
<dbReference type="GO" id="GO:0006811">
    <property type="term" value="P:monoatomic ion transport"/>
    <property type="evidence" value="ECO:0007669"/>
    <property type="project" value="UniProtKB-KW"/>
</dbReference>
<dbReference type="Gene3D" id="1.10.287.3510">
    <property type="match status" value="1"/>
</dbReference>
<dbReference type="InterPro" id="IPR050601">
    <property type="entry name" value="CPA3_antiporter_subunitC"/>
</dbReference>
<dbReference type="InterPro" id="IPR039428">
    <property type="entry name" value="NUOK/Mnh_C1-like"/>
</dbReference>
<dbReference type="NCBIfam" id="NF009303">
    <property type="entry name" value="PRK12660.1"/>
    <property type="match status" value="1"/>
</dbReference>
<dbReference type="PANTHER" id="PTHR34583">
    <property type="entry name" value="ANTIPORTER SUBUNIT MNHC2-RELATED"/>
    <property type="match status" value="1"/>
</dbReference>
<dbReference type="PANTHER" id="PTHR34583:SF2">
    <property type="entry name" value="ANTIPORTER SUBUNIT MNHC2-RELATED"/>
    <property type="match status" value="1"/>
</dbReference>
<dbReference type="Pfam" id="PF00420">
    <property type="entry name" value="Oxidored_q2"/>
    <property type="match status" value="1"/>
</dbReference>
<keyword id="KW-0050">Antiport</keyword>
<keyword id="KW-1003">Cell membrane</keyword>
<keyword id="KW-0406">Ion transport</keyword>
<keyword id="KW-0472">Membrane</keyword>
<keyword id="KW-0812">Transmembrane</keyword>
<keyword id="KW-1133">Transmembrane helix</keyword>
<keyword id="KW-0813">Transport</keyword>
<gene>
    <name type="primary">mnhC2</name>
    <name type="synonym">mrpC2</name>
    <name type="ordered locus">SACOL0681</name>
</gene>
<protein>
    <recommendedName>
        <fullName>Putative antiporter subunit mnhC2</fullName>
    </recommendedName>
    <alternativeName>
        <fullName>Mrp complex subunit C2</fullName>
    </alternativeName>
    <alternativeName>
        <fullName>Putative NADH-ubiquinone oxidoreductase subunit mnhC2</fullName>
    </alternativeName>
</protein>
<accession>Q5HI43</accession>
<name>MNHC2_STAAC</name>
<organism>
    <name type="scientific">Staphylococcus aureus (strain COL)</name>
    <dbReference type="NCBI Taxonomy" id="93062"/>
    <lineage>
        <taxon>Bacteria</taxon>
        <taxon>Bacillati</taxon>
        <taxon>Bacillota</taxon>
        <taxon>Bacilli</taxon>
        <taxon>Bacillales</taxon>
        <taxon>Staphylococcaceae</taxon>
        <taxon>Staphylococcus</taxon>
    </lineage>
</organism>
<feature type="chain" id="PRO_0000372249" description="Putative antiporter subunit mnhC2">
    <location>
        <begin position="1"/>
        <end position="114"/>
    </location>
</feature>
<feature type="transmembrane region" description="Helical" evidence="2">
    <location>
        <begin position="3"/>
        <end position="23"/>
    </location>
</feature>
<feature type="transmembrane region" description="Helical" evidence="2">
    <location>
        <begin position="28"/>
        <end position="48"/>
    </location>
</feature>
<feature type="transmembrane region" description="Helical" evidence="2">
    <location>
        <begin position="72"/>
        <end position="92"/>
    </location>
</feature>
<evidence type="ECO:0000250" key="1"/>
<evidence type="ECO:0000255" key="2"/>
<evidence type="ECO:0000305" key="3"/>
<reference key="1">
    <citation type="journal article" date="2005" name="J. Bacteriol.">
        <title>Insights on evolution of virulence and resistance from the complete genome analysis of an early methicillin-resistant Staphylococcus aureus strain and a biofilm-producing methicillin-resistant Staphylococcus epidermidis strain.</title>
        <authorList>
            <person name="Gill S.R."/>
            <person name="Fouts D.E."/>
            <person name="Archer G.L."/>
            <person name="Mongodin E.F."/>
            <person name="DeBoy R.T."/>
            <person name="Ravel J."/>
            <person name="Paulsen I.T."/>
            <person name="Kolonay J.F."/>
            <person name="Brinkac L.M."/>
            <person name="Beanan M.J."/>
            <person name="Dodson R.J."/>
            <person name="Daugherty S.C."/>
            <person name="Madupu R."/>
            <person name="Angiuoli S.V."/>
            <person name="Durkin A.S."/>
            <person name="Haft D.H."/>
            <person name="Vamathevan J.J."/>
            <person name="Khouri H."/>
            <person name="Utterback T.R."/>
            <person name="Lee C."/>
            <person name="Dimitrov G."/>
            <person name="Jiang L."/>
            <person name="Qin H."/>
            <person name="Weidman J."/>
            <person name="Tran K."/>
            <person name="Kang K.H."/>
            <person name="Hance I.R."/>
            <person name="Nelson K.E."/>
            <person name="Fraser C.M."/>
        </authorList>
    </citation>
    <scope>NUCLEOTIDE SEQUENCE [LARGE SCALE GENOMIC DNA]</scope>
    <source>
        <strain>COL</strain>
    </source>
</reference>
<sequence>MNLILLLVIGFLVFIGTYMILSINLIRIVIGISIYTHAGNLIIMSMGTYGSSRSEPLITGGNQLFVDPLLQAIVLTAIVIGFGMTAFLLVLVYRTYKVTKEDEIEGLRGEDDAK</sequence>
<comment type="subunit">
    <text evidence="1">May form a heterooligomeric complex that consists of seven subunits: mnhA2, mnhB2, mnhC2, mnhD2, mnhE2, mnhF2 and mnhG2.</text>
</comment>
<comment type="subcellular location">
    <subcellularLocation>
        <location evidence="3">Cell membrane</location>
        <topology evidence="3">Multi-pass membrane protein</topology>
    </subcellularLocation>
</comment>
<comment type="similarity">
    <text evidence="3">Belongs to the CPA3 antiporters (TC 2.A.63) subunit C family.</text>
</comment>
<proteinExistence type="inferred from homology"/>